<feature type="chain" id="PRO_0000197418" description="Metallothionein-like protein 1">
    <location>
        <begin position="1"/>
        <end position="64"/>
    </location>
</feature>
<proteinExistence type="inferred from homology"/>
<accession>O48951</accession>
<sequence>MSSKCSNCDCSDSSQCTKKGYSFDLVIVETENRSMDTVIMDAPAAENGGNCKCGPSCACVDCKC</sequence>
<reference key="1">
    <citation type="online journal article" date="1998" name="Plant Gene Register">
        <title>A fruit-related metallothionein-like cDNA clone from sweet cherry corresponds to fruit genes from diverse species.</title>
        <authorList>
            <person name="Wiersma P.A."/>
            <person name="Wu Z."/>
            <person name="Wilson S.M."/>
        </authorList>
        <locator>PGR98-015</locator>
    </citation>
    <scope>NUCLEOTIDE SEQUENCE [MRNA]</scope>
    <source>
        <strain>cv. Summit</strain>
        <tissue>Fruit</tissue>
    </source>
</reference>
<dbReference type="EMBL" id="AF028013">
    <property type="protein sequence ID" value="AAC04612.1"/>
    <property type="molecule type" value="mRNA"/>
</dbReference>
<dbReference type="EnsemblPlants" id="Pav_sc0002828.1_g610.1.mk:mrna">
    <property type="protein sequence ID" value="Pav_sc0002828.1_g610.1.mk:mrna"/>
    <property type="gene ID" value="Pav_sc0002828.1_g610.1.mk"/>
</dbReference>
<dbReference type="Gramene" id="Pav_sc0002828.1_g610.1.mk:mrna">
    <property type="protein sequence ID" value="Pav_sc0002828.1_g610.1.mk:mrna"/>
    <property type="gene ID" value="Pav_sc0002828.1_g610.1.mk"/>
</dbReference>
<dbReference type="Proteomes" id="UP000515124">
    <property type="component" value="Unplaced"/>
</dbReference>
<dbReference type="GO" id="GO:0005507">
    <property type="term" value="F:copper ion binding"/>
    <property type="evidence" value="ECO:0007669"/>
    <property type="project" value="InterPro"/>
</dbReference>
<dbReference type="GO" id="GO:0008270">
    <property type="term" value="F:zinc ion binding"/>
    <property type="evidence" value="ECO:0007669"/>
    <property type="project" value="InterPro"/>
</dbReference>
<dbReference type="GO" id="GO:1990748">
    <property type="term" value="P:cellular detoxification"/>
    <property type="evidence" value="ECO:0000250"/>
    <property type="project" value="UniProtKB"/>
</dbReference>
<dbReference type="GO" id="GO:0006878">
    <property type="term" value="P:intracellular copper ion homeostasis"/>
    <property type="evidence" value="ECO:0007669"/>
    <property type="project" value="InterPro"/>
</dbReference>
<dbReference type="InterPro" id="IPR044671">
    <property type="entry name" value="MT3"/>
</dbReference>
<dbReference type="PANTHER" id="PTHR33357">
    <property type="entry name" value="METALLOTHIONEIN-LIKE PROTEIN 3"/>
    <property type="match status" value="1"/>
</dbReference>
<dbReference type="PANTHER" id="PTHR33357:SF3">
    <property type="entry name" value="METALLOTHIONEIN-LIKE PROTEIN 3"/>
    <property type="match status" value="1"/>
</dbReference>
<keyword id="KW-0479">Metal-binding</keyword>
<keyword id="KW-0480">Metal-thiolate cluster</keyword>
<keyword id="KW-1185">Reference proteome</keyword>
<comment type="function">
    <text>Metallothioneins have a high content of cysteine residues that bind various heavy metals.</text>
</comment>
<comment type="similarity">
    <text evidence="1">Belongs to the metallothionein superfamily. Type 15 family.</text>
</comment>
<name>MT3_PRUAV</name>
<evidence type="ECO:0000305" key="1"/>
<organism>
    <name type="scientific">Prunus avium</name>
    <name type="common">Cherry</name>
    <name type="synonym">Cerasus avium</name>
    <dbReference type="NCBI Taxonomy" id="42229"/>
    <lineage>
        <taxon>Eukaryota</taxon>
        <taxon>Viridiplantae</taxon>
        <taxon>Streptophyta</taxon>
        <taxon>Embryophyta</taxon>
        <taxon>Tracheophyta</taxon>
        <taxon>Spermatophyta</taxon>
        <taxon>Magnoliopsida</taxon>
        <taxon>eudicotyledons</taxon>
        <taxon>Gunneridae</taxon>
        <taxon>Pentapetalae</taxon>
        <taxon>rosids</taxon>
        <taxon>fabids</taxon>
        <taxon>Rosales</taxon>
        <taxon>Rosaceae</taxon>
        <taxon>Amygdaloideae</taxon>
        <taxon>Amygdaleae</taxon>
        <taxon>Prunus</taxon>
    </lineage>
</organism>
<gene>
    <name type="primary">MT1</name>
</gene>
<protein>
    <recommendedName>
        <fullName>Metallothionein-like protein 1</fullName>
        <shortName>MT-1</shortName>
    </recommendedName>
</protein>